<gene>
    <name type="primary">solA</name>
    <name type="ordered locus">b1059</name>
    <name type="ordered locus">JW1046</name>
</gene>
<protein>
    <recommendedName>
        <fullName>N-methyl-L-tryptophan oxidase</fullName>
        <shortName>MTOX</shortName>
        <ecNumber>1.5.3.-</ecNumber>
    </recommendedName>
</protein>
<comment type="function">
    <text>Catalyzes the oxidative demethylation of N-methyl-L-tryptophan. Can also use other N-methyl amino acids, including sarcosine, which, however, is a poor substrate.</text>
</comment>
<comment type="catalytic activity">
    <reaction>
        <text>N(alpha)-methyl-L-tryptophan + O2 + H2O = L-tryptophan + formaldehyde + H2O2</text>
        <dbReference type="Rhea" id="RHEA:28006"/>
        <dbReference type="ChEBI" id="CHEBI:15377"/>
        <dbReference type="ChEBI" id="CHEBI:15379"/>
        <dbReference type="ChEBI" id="CHEBI:16240"/>
        <dbReference type="ChEBI" id="CHEBI:16842"/>
        <dbReference type="ChEBI" id="CHEBI:57283"/>
        <dbReference type="ChEBI" id="CHEBI:57912"/>
    </reaction>
</comment>
<comment type="cofactor">
    <cofactor>
        <name>FAD</name>
        <dbReference type="ChEBI" id="CHEBI:57692"/>
    </cofactor>
    <text>Binds 1 FAD per subunit.</text>
</comment>
<comment type="activity regulation">
    <text>Aromatic carboxylates are competitive inhibitors.</text>
</comment>
<comment type="biophysicochemical properties">
    <phDependence>
        <text>Optimum pH is 8.0.</text>
    </phDependence>
</comment>
<comment type="subunit">
    <text evidence="1">Monomer.</text>
</comment>
<comment type="mass spectrometry" mass="41684.0" method="Electrospray" evidence="3"/>
<comment type="similarity">
    <text evidence="4">Belongs to the MSOX/MTOX family. MTOX subfamily.</text>
</comment>
<accession>P40874</accession>
<accession>Q47144</accession>
<reference key="1">
    <citation type="journal article" date="1996" name="Gene">
        <title>Nucleotide sequence of the Escherichia coli solA gene encoding a sarcosine oxidase-like protein and characterization of its product.</title>
        <authorList>
            <person name="Koyama Y."/>
            <person name="Ohmori H."/>
        </authorList>
    </citation>
    <scope>NUCLEOTIDE SEQUENCE [GENOMIC DNA]</scope>
    <source>
        <strain>K12 / W3110 / ATCC 27325 / DSM 5911</strain>
    </source>
</reference>
<reference key="2">
    <citation type="journal article" date="1996" name="DNA Res.">
        <title>A 718-kb DNA sequence of the Escherichia coli K-12 genome corresponding to the 12.7-28.0 min region on the linkage map.</title>
        <authorList>
            <person name="Oshima T."/>
            <person name="Aiba H."/>
            <person name="Baba T."/>
            <person name="Fujita K."/>
            <person name="Hayashi K."/>
            <person name="Honjo A."/>
            <person name="Ikemoto K."/>
            <person name="Inada T."/>
            <person name="Itoh T."/>
            <person name="Kajihara M."/>
            <person name="Kanai K."/>
            <person name="Kashimoto K."/>
            <person name="Kimura S."/>
            <person name="Kitagawa M."/>
            <person name="Makino K."/>
            <person name="Masuda S."/>
            <person name="Miki T."/>
            <person name="Mizobuchi K."/>
            <person name="Mori H."/>
            <person name="Motomura K."/>
            <person name="Nakamura Y."/>
            <person name="Nashimoto H."/>
            <person name="Nishio Y."/>
            <person name="Saito N."/>
            <person name="Sampei G."/>
            <person name="Seki Y."/>
            <person name="Tagami H."/>
            <person name="Takemoto K."/>
            <person name="Wada C."/>
            <person name="Yamamoto Y."/>
            <person name="Yano M."/>
            <person name="Horiuchi T."/>
        </authorList>
    </citation>
    <scope>NUCLEOTIDE SEQUENCE [LARGE SCALE GENOMIC DNA]</scope>
    <source>
        <strain>K12 / W3110 / ATCC 27325 / DSM 5911</strain>
    </source>
</reference>
<reference key="3">
    <citation type="journal article" date="1997" name="Science">
        <title>The complete genome sequence of Escherichia coli K-12.</title>
        <authorList>
            <person name="Blattner F.R."/>
            <person name="Plunkett G. III"/>
            <person name="Bloch C.A."/>
            <person name="Perna N.T."/>
            <person name="Burland V."/>
            <person name="Riley M."/>
            <person name="Collado-Vides J."/>
            <person name="Glasner J.D."/>
            <person name="Rode C.K."/>
            <person name="Mayhew G.F."/>
            <person name="Gregor J."/>
            <person name="Davis N.W."/>
            <person name="Kirkpatrick H.A."/>
            <person name="Goeden M.A."/>
            <person name="Rose D.J."/>
            <person name="Mau B."/>
            <person name="Shao Y."/>
        </authorList>
    </citation>
    <scope>NUCLEOTIDE SEQUENCE [LARGE SCALE GENOMIC DNA]</scope>
    <source>
        <strain>K12 / MG1655 / ATCC 47076</strain>
    </source>
</reference>
<reference key="4">
    <citation type="journal article" date="2006" name="Mol. Syst. Biol.">
        <title>Highly accurate genome sequences of Escherichia coli K-12 strains MG1655 and W3110.</title>
        <authorList>
            <person name="Hayashi K."/>
            <person name="Morooka N."/>
            <person name="Yamamoto Y."/>
            <person name="Fujita K."/>
            <person name="Isono K."/>
            <person name="Choi S."/>
            <person name="Ohtsubo E."/>
            <person name="Baba T."/>
            <person name="Wanner B.L."/>
            <person name="Mori H."/>
            <person name="Horiuchi T."/>
        </authorList>
    </citation>
    <scope>NUCLEOTIDE SEQUENCE [LARGE SCALE GENOMIC DNA]</scope>
    <source>
        <strain>K12 / W3110 / ATCC 27325 / DSM 5911</strain>
    </source>
</reference>
<reference key="5">
    <citation type="journal article" date="1999" name="Biochemistry">
        <title>Structure of the flavocoenzyme of two homologous amine oxidases: monomeric sarcosine oxidase and N-methyltryptophan oxidase.</title>
        <authorList>
            <person name="Wagner M.A."/>
            <person name="Khanna P."/>
            <person name="Jorns M.S."/>
        </authorList>
    </citation>
    <scope>CHARACTERIZATION</scope>
    <scope>MASS SPECTROMETRY</scope>
    <source>
        <strain>K12 / DH1 / ATCC 33849 / DSM 4235 / NCIB 12045</strain>
    </source>
</reference>
<reference key="6">
    <citation type="journal article" date="2001" name="Biochemistry">
        <title>Characterization of the FAD-containing N-methyltryptophan oxidase from Escherichia coli.</title>
        <authorList>
            <person name="Khanna P."/>
            <person name="Jorns M.S."/>
        </authorList>
    </citation>
    <scope>CHARACTERIZATION</scope>
    <source>
        <strain>K12 / W3110 / ATCC 27325 / DSM 5911</strain>
    </source>
</reference>
<reference key="7">
    <citation type="journal article" date="2001" name="Biochemistry">
        <title>N-methyltryptophan oxidase from Escherichia coli: reaction kinetics with N-methyl amino acid and carbinolamine substrates.</title>
        <authorList>
            <person name="Khanna P."/>
            <person name="Jorns M.S."/>
        </authorList>
    </citation>
    <scope>CHARACTERIZATION</scope>
</reference>
<reference key="8">
    <citation type="journal article" date="2008" name="Proteins">
        <title>The X-ray structure of N-methyltryptophan oxidase reveals the structural determinants of substrate specificity.</title>
        <authorList>
            <person name="Ilari A."/>
            <person name="Bonamore A."/>
            <person name="Franceschini S."/>
            <person name="Fiorillo A."/>
            <person name="Boffi A."/>
            <person name="Colotti G."/>
        </authorList>
    </citation>
    <scope>X-RAY CRYSTALLOGRAPHY (3.20 ANGSTROMS) OF 1-372 IN COMPLEX WITH FAD</scope>
    <source>
        <strain>K12 / W3110 / ATCC 27325 / DSM 5911</strain>
    </source>
</reference>
<evidence type="ECO:0000250" key="1"/>
<evidence type="ECO:0000255" key="2"/>
<evidence type="ECO:0000269" key="3">
    <source>
    </source>
</evidence>
<evidence type="ECO:0000305" key="4"/>
<evidence type="ECO:0007829" key="5">
    <source>
        <dbReference type="PDB" id="2UZZ"/>
    </source>
</evidence>
<keyword id="KW-0002">3D-structure</keyword>
<keyword id="KW-0274">FAD</keyword>
<keyword id="KW-0285">Flavoprotein</keyword>
<keyword id="KW-0560">Oxidoreductase</keyword>
<keyword id="KW-1185">Reference proteome</keyword>
<organism>
    <name type="scientific">Escherichia coli (strain K12)</name>
    <dbReference type="NCBI Taxonomy" id="83333"/>
    <lineage>
        <taxon>Bacteria</taxon>
        <taxon>Pseudomonadati</taxon>
        <taxon>Pseudomonadota</taxon>
        <taxon>Gammaproteobacteria</taxon>
        <taxon>Enterobacterales</taxon>
        <taxon>Enterobacteriaceae</taxon>
        <taxon>Escherichia</taxon>
    </lineage>
</organism>
<feature type="chain" id="PRO_0000213765" description="N-methyl-L-tryptophan oxidase">
    <location>
        <begin position="1"/>
        <end position="372"/>
    </location>
</feature>
<feature type="binding site" evidence="2">
    <location>
        <begin position="4"/>
        <end position="34"/>
    </location>
    <ligand>
        <name>FAD</name>
        <dbReference type="ChEBI" id="CHEBI:57692"/>
    </ligand>
</feature>
<feature type="modified residue" description="S-8alpha-FAD cysteine">
    <location>
        <position position="308"/>
    </location>
</feature>
<feature type="strand" evidence="5">
    <location>
        <begin position="3"/>
        <end position="8"/>
    </location>
</feature>
<feature type="helix" evidence="5">
    <location>
        <begin position="12"/>
        <end position="23"/>
    </location>
</feature>
<feature type="strand" evidence="5">
    <location>
        <begin position="28"/>
        <end position="31"/>
    </location>
</feature>
<feature type="strand" evidence="5">
    <location>
        <begin position="36"/>
        <end position="42"/>
    </location>
</feature>
<feature type="strand" evidence="5">
    <location>
        <begin position="45"/>
        <end position="50"/>
    </location>
</feature>
<feature type="helix" evidence="5">
    <location>
        <begin position="58"/>
        <end position="60"/>
    </location>
</feature>
<feature type="helix" evidence="5">
    <location>
        <begin position="61"/>
        <end position="76"/>
    </location>
</feature>
<feature type="strand" evidence="5">
    <location>
        <begin position="79"/>
        <end position="81"/>
    </location>
</feature>
<feature type="strand" evidence="5">
    <location>
        <begin position="83"/>
        <end position="85"/>
    </location>
</feature>
<feature type="strand" evidence="5">
    <location>
        <begin position="89"/>
        <end position="94"/>
    </location>
</feature>
<feature type="helix" evidence="5">
    <location>
        <begin position="98"/>
        <end position="109"/>
    </location>
</feature>
<feature type="strand" evidence="5">
    <location>
        <begin position="114"/>
        <end position="118"/>
    </location>
</feature>
<feature type="helix" evidence="5">
    <location>
        <begin position="119"/>
        <end position="125"/>
    </location>
</feature>
<feature type="strand" evidence="5">
    <location>
        <begin position="135"/>
        <end position="142"/>
    </location>
</feature>
<feature type="strand" evidence="5">
    <location>
        <begin position="144"/>
        <end position="147"/>
    </location>
</feature>
<feature type="helix" evidence="5">
    <location>
        <begin position="148"/>
        <end position="161"/>
    </location>
</feature>
<feature type="strand" evidence="5">
    <location>
        <begin position="165"/>
        <end position="167"/>
    </location>
</feature>
<feature type="strand" evidence="5">
    <location>
        <begin position="172"/>
        <end position="177"/>
    </location>
</feature>
<feature type="strand" evidence="5">
    <location>
        <begin position="179"/>
        <end position="188"/>
    </location>
</feature>
<feature type="strand" evidence="5">
    <location>
        <begin position="190"/>
        <end position="198"/>
    </location>
</feature>
<feature type="helix" evidence="5">
    <location>
        <begin position="201"/>
        <end position="206"/>
    </location>
</feature>
<feature type="strand" evidence="5">
    <location>
        <begin position="214"/>
        <end position="217"/>
    </location>
</feature>
<feature type="strand" evidence="5">
    <location>
        <begin position="220"/>
        <end position="223"/>
    </location>
</feature>
<feature type="helix" evidence="5">
    <location>
        <begin position="227"/>
        <end position="229"/>
    </location>
</feature>
<feature type="turn" evidence="5">
    <location>
        <begin position="231"/>
        <end position="234"/>
    </location>
</feature>
<feature type="strand" evidence="5">
    <location>
        <begin position="237"/>
        <end position="241"/>
    </location>
</feature>
<feature type="strand" evidence="5">
    <location>
        <begin position="247"/>
        <end position="251"/>
    </location>
</feature>
<feature type="strand" evidence="5">
    <location>
        <begin position="254"/>
        <end position="256"/>
    </location>
</feature>
<feature type="strand" evidence="5">
    <location>
        <begin position="258"/>
        <end position="264"/>
    </location>
</feature>
<feature type="helix" evidence="5">
    <location>
        <begin position="272"/>
        <end position="274"/>
    </location>
</feature>
<feature type="helix" evidence="5">
    <location>
        <begin position="284"/>
        <end position="286"/>
    </location>
</feature>
<feature type="helix" evidence="5">
    <location>
        <begin position="289"/>
        <end position="295"/>
    </location>
</feature>
<feature type="strand" evidence="5">
    <location>
        <begin position="302"/>
        <end position="305"/>
    </location>
</feature>
<feature type="strand" evidence="5">
    <location>
        <begin position="309"/>
        <end position="312"/>
    </location>
</feature>
<feature type="strand" evidence="5">
    <location>
        <begin position="320"/>
        <end position="323"/>
    </location>
</feature>
<feature type="strand" evidence="5">
    <location>
        <begin position="326"/>
        <end position="332"/>
    </location>
</feature>
<feature type="helix" evidence="5">
    <location>
        <begin position="340"/>
        <end position="342"/>
    </location>
</feature>
<feature type="helix" evidence="5">
    <location>
        <begin position="343"/>
        <end position="354"/>
    </location>
</feature>
<feature type="helix" evidence="5">
    <location>
        <begin position="364"/>
        <end position="366"/>
    </location>
</feature>
<name>MTOX_ECOLI</name>
<dbReference type="EC" id="1.5.3.-"/>
<dbReference type="EMBL" id="D31709">
    <property type="protein sequence ID" value="BAA06516.1"/>
    <property type="molecule type" value="Genomic_DNA"/>
</dbReference>
<dbReference type="EMBL" id="U00096">
    <property type="protein sequence ID" value="AAC74143.1"/>
    <property type="molecule type" value="Genomic_DNA"/>
</dbReference>
<dbReference type="EMBL" id="AP009048">
    <property type="protein sequence ID" value="BAA35856.1"/>
    <property type="molecule type" value="Genomic_DNA"/>
</dbReference>
<dbReference type="PIR" id="JC5371">
    <property type="entry name" value="JC5371"/>
</dbReference>
<dbReference type="RefSeq" id="NP_415577.1">
    <property type="nucleotide sequence ID" value="NC_000913.3"/>
</dbReference>
<dbReference type="RefSeq" id="WP_000872833.1">
    <property type="nucleotide sequence ID" value="NZ_LN832404.1"/>
</dbReference>
<dbReference type="PDB" id="2UZZ">
    <property type="method" value="X-ray"/>
    <property type="resolution" value="3.20 A"/>
    <property type="chains" value="A/B/C/D=1-372"/>
</dbReference>
<dbReference type="PDBsum" id="2UZZ"/>
<dbReference type="SMR" id="P40874"/>
<dbReference type="BioGRID" id="4261754">
    <property type="interactions" value="93"/>
</dbReference>
<dbReference type="FunCoup" id="P40874">
    <property type="interactions" value="484"/>
</dbReference>
<dbReference type="IntAct" id="P40874">
    <property type="interactions" value="9"/>
</dbReference>
<dbReference type="STRING" id="511145.b1059"/>
<dbReference type="jPOST" id="P40874"/>
<dbReference type="PaxDb" id="511145-b1059"/>
<dbReference type="EnsemblBacteria" id="AAC74143">
    <property type="protein sequence ID" value="AAC74143"/>
    <property type="gene ID" value="b1059"/>
</dbReference>
<dbReference type="GeneID" id="75203646"/>
<dbReference type="GeneID" id="944983"/>
<dbReference type="KEGG" id="ecj:JW1046"/>
<dbReference type="KEGG" id="eco:b1059"/>
<dbReference type="KEGG" id="ecoc:C3026_06440"/>
<dbReference type="PATRIC" id="fig|1411691.4.peg.1209"/>
<dbReference type="EchoBASE" id="EB2535"/>
<dbReference type="eggNOG" id="COG0665">
    <property type="taxonomic scope" value="Bacteria"/>
</dbReference>
<dbReference type="HOGENOM" id="CLU_007884_2_1_6"/>
<dbReference type="InParanoid" id="P40874"/>
<dbReference type="OMA" id="WPMLWAH"/>
<dbReference type="OrthoDB" id="9806257at2"/>
<dbReference type="PhylomeDB" id="P40874"/>
<dbReference type="BioCyc" id="EcoCyc:SARCOX-MONOMER"/>
<dbReference type="BioCyc" id="MetaCyc:SARCOX-MONOMER"/>
<dbReference type="SABIO-RK" id="P40874"/>
<dbReference type="EvolutionaryTrace" id="P40874"/>
<dbReference type="PRO" id="PR:P40874"/>
<dbReference type="Proteomes" id="UP000000625">
    <property type="component" value="Chromosome"/>
</dbReference>
<dbReference type="GO" id="GO:0005829">
    <property type="term" value="C:cytosol"/>
    <property type="evidence" value="ECO:0000314"/>
    <property type="project" value="EcoCyc"/>
</dbReference>
<dbReference type="GO" id="GO:0050660">
    <property type="term" value="F:flavin adenine dinucleotide binding"/>
    <property type="evidence" value="ECO:0000314"/>
    <property type="project" value="EcoCyc"/>
</dbReference>
<dbReference type="GO" id="GO:0050131">
    <property type="term" value="F:N-methyl-L-amino-acid oxidase activity"/>
    <property type="evidence" value="ECO:0000314"/>
    <property type="project" value="EcoCyc"/>
</dbReference>
<dbReference type="GO" id="GO:0008115">
    <property type="term" value="F:sarcosine oxidase activity"/>
    <property type="evidence" value="ECO:0000318"/>
    <property type="project" value="GO_Central"/>
</dbReference>
<dbReference type="GO" id="GO:0006974">
    <property type="term" value="P:DNA damage response"/>
    <property type="evidence" value="ECO:0000270"/>
    <property type="project" value="EcoliWiki"/>
</dbReference>
<dbReference type="Gene3D" id="3.30.9.10">
    <property type="entry name" value="D-Amino Acid Oxidase, subunit A, domain 2"/>
    <property type="match status" value="1"/>
</dbReference>
<dbReference type="Gene3D" id="3.50.50.60">
    <property type="entry name" value="FAD/NAD(P)-binding domain"/>
    <property type="match status" value="1"/>
</dbReference>
<dbReference type="HAMAP" id="MF_00515">
    <property type="entry name" value="MTOX"/>
    <property type="match status" value="1"/>
</dbReference>
<dbReference type="InterPro" id="IPR006076">
    <property type="entry name" value="FAD-dep_OxRdtase"/>
</dbReference>
<dbReference type="InterPro" id="IPR036188">
    <property type="entry name" value="FAD/NAD-bd_sf"/>
</dbReference>
<dbReference type="InterPro" id="IPR023493">
    <property type="entry name" value="Me_Trp_Oxase_MTOX"/>
</dbReference>
<dbReference type="InterPro" id="IPR045170">
    <property type="entry name" value="MTOX"/>
</dbReference>
<dbReference type="NCBIfam" id="NF008425">
    <property type="entry name" value="PRK11259.1"/>
    <property type="match status" value="1"/>
</dbReference>
<dbReference type="PANTHER" id="PTHR10961:SF7">
    <property type="entry name" value="FAD DEPENDENT OXIDOREDUCTASE DOMAIN-CONTAINING PROTEIN"/>
    <property type="match status" value="1"/>
</dbReference>
<dbReference type="PANTHER" id="PTHR10961">
    <property type="entry name" value="PEROXISOMAL SARCOSINE OXIDASE"/>
    <property type="match status" value="1"/>
</dbReference>
<dbReference type="Pfam" id="PF01266">
    <property type="entry name" value="DAO"/>
    <property type="match status" value="1"/>
</dbReference>
<dbReference type="SUPFAM" id="SSF54373">
    <property type="entry name" value="FAD-linked reductases, C-terminal domain"/>
    <property type="match status" value="1"/>
</dbReference>
<dbReference type="SUPFAM" id="SSF51905">
    <property type="entry name" value="FAD/NAD(P)-binding domain"/>
    <property type="match status" value="1"/>
</dbReference>
<sequence length="372" mass="40902">MKYDLIIIGSGSVGAAAGYYATRAGLNVLMTDAHMPPHQHGSHHGDTRLIRHAYGEGEKYVPLVLRAQTLWDELSRHNEEDPIFVRSGVINLGPADSTFLANVAHSAEQWQLNVEKLDAQGIMARWPEIRVPDNYIGLFETDSGFLRSELAIKTWIQLAKEAGCAQLFNCPVTAIRHDDDGVTIETADGEYQAKKAIVCAGTWVKDLLPELPVQPVRKVFAWYQADGRYSVKNKFPAFTGELPNGDQYYGFPAENDALKIGKHNGGQVIHSADERVPFAEVASDGSEAFPFLRNVLPGIGCCLYGAACTYDNSPDEDFIIDTLPGHDNTLLITGLSGHGFKFASVLGEIAADFAQDKKSDFDLTPFRLSRFQ</sequence>
<proteinExistence type="evidence at protein level"/>